<feature type="chain" id="PRO_1000088117" description="Pyridoxine/pyridoxamine 5'-phosphate oxidase">
    <location>
        <begin position="1"/>
        <end position="218"/>
    </location>
</feature>
<feature type="binding site" evidence="1">
    <location>
        <begin position="14"/>
        <end position="17"/>
    </location>
    <ligand>
        <name>substrate</name>
    </ligand>
</feature>
<feature type="binding site" evidence="1">
    <location>
        <begin position="67"/>
        <end position="72"/>
    </location>
    <ligand>
        <name>FMN</name>
        <dbReference type="ChEBI" id="CHEBI:58210"/>
    </ligand>
</feature>
<feature type="binding site" evidence="1">
    <location>
        <position position="72"/>
    </location>
    <ligand>
        <name>substrate</name>
    </ligand>
</feature>
<feature type="binding site" evidence="1">
    <location>
        <begin position="82"/>
        <end position="83"/>
    </location>
    <ligand>
        <name>FMN</name>
        <dbReference type="ChEBI" id="CHEBI:58210"/>
    </ligand>
</feature>
<feature type="binding site" evidence="1">
    <location>
        <position position="88"/>
    </location>
    <ligand>
        <name>FMN</name>
        <dbReference type="ChEBI" id="CHEBI:58210"/>
    </ligand>
</feature>
<feature type="binding site" evidence="1">
    <location>
        <position position="89"/>
    </location>
    <ligand>
        <name>FMN</name>
        <dbReference type="ChEBI" id="CHEBI:58210"/>
    </ligand>
</feature>
<feature type="binding site" evidence="1">
    <location>
        <position position="111"/>
    </location>
    <ligand>
        <name>FMN</name>
        <dbReference type="ChEBI" id="CHEBI:58210"/>
    </ligand>
</feature>
<feature type="binding site" evidence="1">
    <location>
        <position position="129"/>
    </location>
    <ligand>
        <name>substrate</name>
    </ligand>
</feature>
<feature type="binding site" evidence="1">
    <location>
        <position position="133"/>
    </location>
    <ligand>
        <name>substrate</name>
    </ligand>
</feature>
<feature type="binding site" evidence="1">
    <location>
        <position position="137"/>
    </location>
    <ligand>
        <name>substrate</name>
    </ligand>
</feature>
<feature type="binding site" evidence="1">
    <location>
        <begin position="146"/>
        <end position="147"/>
    </location>
    <ligand>
        <name>FMN</name>
        <dbReference type="ChEBI" id="CHEBI:58210"/>
    </ligand>
</feature>
<feature type="binding site" evidence="1">
    <location>
        <position position="191"/>
    </location>
    <ligand>
        <name>FMN</name>
        <dbReference type="ChEBI" id="CHEBI:58210"/>
    </ligand>
</feature>
<feature type="binding site" evidence="1">
    <location>
        <begin position="197"/>
        <end position="199"/>
    </location>
    <ligand>
        <name>substrate</name>
    </ligand>
</feature>
<feature type="binding site" evidence="1">
    <location>
        <position position="201"/>
    </location>
    <ligand>
        <name>FMN</name>
        <dbReference type="ChEBI" id="CHEBI:58210"/>
    </ligand>
</feature>
<sequence>MSDNDQLQQIAHLRREYTKGGLRRRDLPAEPLTLFERWLGQACDARLADPTAMVVATVDDKGQPYQRIVLLKHYDEKGLVFYTNLGSRKAHQIEHNPRISLLFPWHMLERQVMVTGKAERLSTLEVVRYFHSRPRDSQIGAWVSKQSSRISARGILESKFLELKQKFQQGEVPLPSFWGGFRVSIEQMEFWQGGEHRLHDRFLYQRDDGAWKIDRLAP</sequence>
<gene>
    <name evidence="1" type="primary">pdxH</name>
    <name type="ordered locus">SPAB_01873</name>
</gene>
<comment type="function">
    <text evidence="1">Catalyzes the oxidation of either pyridoxine 5'-phosphate (PNP) or pyridoxamine 5'-phosphate (PMP) into pyridoxal 5'-phosphate (PLP).</text>
</comment>
<comment type="catalytic activity">
    <reaction evidence="1">
        <text>pyridoxamine 5'-phosphate + O2 + H2O = pyridoxal 5'-phosphate + H2O2 + NH4(+)</text>
        <dbReference type="Rhea" id="RHEA:15817"/>
        <dbReference type="ChEBI" id="CHEBI:15377"/>
        <dbReference type="ChEBI" id="CHEBI:15379"/>
        <dbReference type="ChEBI" id="CHEBI:16240"/>
        <dbReference type="ChEBI" id="CHEBI:28938"/>
        <dbReference type="ChEBI" id="CHEBI:58451"/>
        <dbReference type="ChEBI" id="CHEBI:597326"/>
        <dbReference type="EC" id="1.4.3.5"/>
    </reaction>
</comment>
<comment type="catalytic activity">
    <reaction evidence="1">
        <text>pyridoxine 5'-phosphate + O2 = pyridoxal 5'-phosphate + H2O2</text>
        <dbReference type="Rhea" id="RHEA:15149"/>
        <dbReference type="ChEBI" id="CHEBI:15379"/>
        <dbReference type="ChEBI" id="CHEBI:16240"/>
        <dbReference type="ChEBI" id="CHEBI:58589"/>
        <dbReference type="ChEBI" id="CHEBI:597326"/>
        <dbReference type="EC" id="1.4.3.5"/>
    </reaction>
</comment>
<comment type="cofactor">
    <cofactor evidence="1">
        <name>FMN</name>
        <dbReference type="ChEBI" id="CHEBI:58210"/>
    </cofactor>
    <text evidence="1">Binds 1 FMN per subunit.</text>
</comment>
<comment type="pathway">
    <text evidence="1">Cofactor metabolism; pyridoxal 5'-phosphate salvage; pyridoxal 5'-phosphate from pyridoxamine 5'-phosphate: step 1/1.</text>
</comment>
<comment type="pathway">
    <text evidence="1">Cofactor metabolism; pyridoxal 5'-phosphate salvage; pyridoxal 5'-phosphate from pyridoxine 5'-phosphate: step 1/1.</text>
</comment>
<comment type="subunit">
    <text evidence="1">Homodimer.</text>
</comment>
<comment type="similarity">
    <text evidence="1">Belongs to the pyridoxamine 5'-phosphate oxidase family.</text>
</comment>
<dbReference type="EC" id="1.4.3.5" evidence="1"/>
<dbReference type="EMBL" id="CP000886">
    <property type="protein sequence ID" value="ABX67266.1"/>
    <property type="molecule type" value="Genomic_DNA"/>
</dbReference>
<dbReference type="RefSeq" id="WP_001282334.1">
    <property type="nucleotide sequence ID" value="NC_010102.1"/>
</dbReference>
<dbReference type="SMR" id="A9N035"/>
<dbReference type="KEGG" id="spq:SPAB_01873"/>
<dbReference type="PATRIC" id="fig|1016998.12.peg.1765"/>
<dbReference type="HOGENOM" id="CLU_032263_2_2_6"/>
<dbReference type="BioCyc" id="SENT1016998:SPAB_RS07605-MONOMER"/>
<dbReference type="UniPathway" id="UPA01068">
    <property type="reaction ID" value="UER00304"/>
</dbReference>
<dbReference type="UniPathway" id="UPA01068">
    <property type="reaction ID" value="UER00305"/>
</dbReference>
<dbReference type="Proteomes" id="UP000008556">
    <property type="component" value="Chromosome"/>
</dbReference>
<dbReference type="GO" id="GO:0010181">
    <property type="term" value="F:FMN binding"/>
    <property type="evidence" value="ECO:0007669"/>
    <property type="project" value="UniProtKB-UniRule"/>
</dbReference>
<dbReference type="GO" id="GO:0004733">
    <property type="term" value="F:pyridoxamine phosphate oxidase activity"/>
    <property type="evidence" value="ECO:0007669"/>
    <property type="project" value="UniProtKB-UniRule"/>
</dbReference>
<dbReference type="GO" id="GO:0008615">
    <property type="term" value="P:pyridoxine biosynthetic process"/>
    <property type="evidence" value="ECO:0007669"/>
    <property type="project" value="UniProtKB-KW"/>
</dbReference>
<dbReference type="FunFam" id="2.30.110.10:FF:000001">
    <property type="entry name" value="Pyridoxine/pyridoxamine 5'-phosphate oxidase"/>
    <property type="match status" value="1"/>
</dbReference>
<dbReference type="Gene3D" id="2.30.110.10">
    <property type="entry name" value="Electron Transport, Fmn-binding Protein, Chain A"/>
    <property type="match status" value="1"/>
</dbReference>
<dbReference type="HAMAP" id="MF_01629">
    <property type="entry name" value="PdxH"/>
    <property type="match status" value="1"/>
</dbReference>
<dbReference type="InterPro" id="IPR000659">
    <property type="entry name" value="Pyridox_Oxase"/>
</dbReference>
<dbReference type="InterPro" id="IPR019740">
    <property type="entry name" value="Pyridox_Oxase_CS"/>
</dbReference>
<dbReference type="InterPro" id="IPR011576">
    <property type="entry name" value="Pyridox_Oxase_N"/>
</dbReference>
<dbReference type="InterPro" id="IPR019576">
    <property type="entry name" value="Pyridoxamine_oxidase_dimer_C"/>
</dbReference>
<dbReference type="InterPro" id="IPR012349">
    <property type="entry name" value="Split_barrel_FMN-bd"/>
</dbReference>
<dbReference type="NCBIfam" id="TIGR00558">
    <property type="entry name" value="pdxH"/>
    <property type="match status" value="1"/>
</dbReference>
<dbReference type="NCBIfam" id="NF004231">
    <property type="entry name" value="PRK05679.1"/>
    <property type="match status" value="1"/>
</dbReference>
<dbReference type="PANTHER" id="PTHR10851:SF0">
    <property type="entry name" value="PYRIDOXINE-5'-PHOSPHATE OXIDASE"/>
    <property type="match status" value="1"/>
</dbReference>
<dbReference type="PANTHER" id="PTHR10851">
    <property type="entry name" value="PYRIDOXINE-5-PHOSPHATE OXIDASE"/>
    <property type="match status" value="1"/>
</dbReference>
<dbReference type="Pfam" id="PF10590">
    <property type="entry name" value="PNP_phzG_C"/>
    <property type="match status" value="1"/>
</dbReference>
<dbReference type="Pfam" id="PF01243">
    <property type="entry name" value="PNPOx_N"/>
    <property type="match status" value="1"/>
</dbReference>
<dbReference type="PIRSF" id="PIRSF000190">
    <property type="entry name" value="Pyd_amn-ph_oxd"/>
    <property type="match status" value="1"/>
</dbReference>
<dbReference type="SUPFAM" id="SSF50475">
    <property type="entry name" value="FMN-binding split barrel"/>
    <property type="match status" value="1"/>
</dbReference>
<dbReference type="PROSITE" id="PS01064">
    <property type="entry name" value="PYRIDOX_OXIDASE"/>
    <property type="match status" value="1"/>
</dbReference>
<protein>
    <recommendedName>
        <fullName evidence="1">Pyridoxine/pyridoxamine 5'-phosphate oxidase</fullName>
        <ecNumber evidence="1">1.4.3.5</ecNumber>
    </recommendedName>
    <alternativeName>
        <fullName evidence="1">PNP/PMP oxidase</fullName>
        <shortName evidence="1">PNPOx</shortName>
    </alternativeName>
    <alternativeName>
        <fullName evidence="1">Pyridoxal 5'-phosphate synthase</fullName>
    </alternativeName>
</protein>
<reference key="1">
    <citation type="submission" date="2007-11" db="EMBL/GenBank/DDBJ databases">
        <authorList>
            <consortium name="The Salmonella enterica serovar Paratyphi B Genome Sequencing Project"/>
            <person name="McClelland M."/>
            <person name="Sanderson E.K."/>
            <person name="Porwollik S."/>
            <person name="Spieth J."/>
            <person name="Clifton W.S."/>
            <person name="Fulton R."/>
            <person name="Cordes M."/>
            <person name="Wollam A."/>
            <person name="Shah N."/>
            <person name="Pepin K."/>
            <person name="Bhonagiri V."/>
            <person name="Nash W."/>
            <person name="Johnson M."/>
            <person name="Thiruvilangam P."/>
            <person name="Wilson R."/>
        </authorList>
    </citation>
    <scope>NUCLEOTIDE SEQUENCE [LARGE SCALE GENOMIC DNA]</scope>
    <source>
        <strain>ATCC BAA-1250 / SPB7</strain>
    </source>
</reference>
<accession>A9N035</accession>
<evidence type="ECO:0000255" key="1">
    <source>
        <dbReference type="HAMAP-Rule" id="MF_01629"/>
    </source>
</evidence>
<name>PDXH_SALPB</name>
<keyword id="KW-0285">Flavoprotein</keyword>
<keyword id="KW-0288">FMN</keyword>
<keyword id="KW-0560">Oxidoreductase</keyword>
<keyword id="KW-0664">Pyridoxine biosynthesis</keyword>
<organism>
    <name type="scientific">Salmonella paratyphi B (strain ATCC BAA-1250 / SPB7)</name>
    <dbReference type="NCBI Taxonomy" id="1016998"/>
    <lineage>
        <taxon>Bacteria</taxon>
        <taxon>Pseudomonadati</taxon>
        <taxon>Pseudomonadota</taxon>
        <taxon>Gammaproteobacteria</taxon>
        <taxon>Enterobacterales</taxon>
        <taxon>Enterobacteriaceae</taxon>
        <taxon>Salmonella</taxon>
    </lineage>
</organism>
<proteinExistence type="inferred from homology"/>